<name>Y181_TREPA</name>
<sequence>MRIYLRVVLPLSLALNSYGVLAFFWGERGVCAMRLLEREKKELVHHIQTLAERGRDLAAVVDALSFDEETIGAYARQLGYVRAGDVLVRPVNFTVAHMHTLDSGDARPLVAPACFSDTRCKVYALCVGFFVVLLQLLWGSARAYFKT</sequence>
<dbReference type="EMBL" id="AE000520">
    <property type="protein sequence ID" value="AAC65194.1"/>
    <property type="molecule type" value="Genomic_DNA"/>
</dbReference>
<dbReference type="PIR" id="G71353">
    <property type="entry name" value="G71353"/>
</dbReference>
<dbReference type="RefSeq" id="WP_010881628.1">
    <property type="nucleotide sequence ID" value="NC_021490.2"/>
</dbReference>
<dbReference type="SMR" id="O83211"/>
<dbReference type="STRING" id="243276.TP_0181"/>
<dbReference type="EnsemblBacteria" id="AAC65194">
    <property type="protein sequence ID" value="AAC65194"/>
    <property type="gene ID" value="TP_0181"/>
</dbReference>
<dbReference type="KEGG" id="tpa:TP_0181"/>
<dbReference type="KEGG" id="tpw:TPANIC_0181"/>
<dbReference type="eggNOG" id="COG2919">
    <property type="taxonomic scope" value="Bacteria"/>
</dbReference>
<dbReference type="HOGENOM" id="CLU_146778_0_0_12"/>
<dbReference type="OrthoDB" id="360055at2"/>
<dbReference type="Proteomes" id="UP000000811">
    <property type="component" value="Chromosome"/>
</dbReference>
<dbReference type="GO" id="GO:0005886">
    <property type="term" value="C:plasma membrane"/>
    <property type="evidence" value="ECO:0007669"/>
    <property type="project" value="UniProtKB-SubCell"/>
</dbReference>
<dbReference type="InterPro" id="IPR007060">
    <property type="entry name" value="FtsL/DivIC"/>
</dbReference>
<dbReference type="Pfam" id="PF04977">
    <property type="entry name" value="DivIC"/>
    <property type="match status" value="1"/>
</dbReference>
<keyword id="KW-1003">Cell membrane</keyword>
<keyword id="KW-0472">Membrane</keyword>
<keyword id="KW-1185">Reference proteome</keyword>
<keyword id="KW-0812">Transmembrane</keyword>
<keyword id="KW-1133">Transmembrane helix</keyword>
<proteinExistence type="predicted"/>
<reference key="1">
    <citation type="journal article" date="1998" name="Science">
        <title>Complete genome sequence of Treponema pallidum, the syphilis spirochete.</title>
        <authorList>
            <person name="Fraser C.M."/>
            <person name="Norris S.J."/>
            <person name="Weinstock G.M."/>
            <person name="White O."/>
            <person name="Sutton G.G."/>
            <person name="Dodson R.J."/>
            <person name="Gwinn M.L."/>
            <person name="Hickey E.K."/>
            <person name="Clayton R.A."/>
            <person name="Ketchum K.A."/>
            <person name="Sodergren E."/>
            <person name="Hardham J.M."/>
            <person name="McLeod M.P."/>
            <person name="Salzberg S.L."/>
            <person name="Peterson J.D."/>
            <person name="Khalak H.G."/>
            <person name="Richardson D.L."/>
            <person name="Howell J.K."/>
            <person name="Chidambaram M."/>
            <person name="Utterback T.R."/>
            <person name="McDonald L.A."/>
            <person name="Artiach P."/>
            <person name="Bowman C."/>
            <person name="Cotton M.D."/>
            <person name="Fujii C."/>
            <person name="Garland S.A."/>
            <person name="Hatch B."/>
            <person name="Horst K."/>
            <person name="Roberts K.M."/>
            <person name="Sandusky M."/>
            <person name="Weidman J.F."/>
            <person name="Smith H.O."/>
            <person name="Venter J.C."/>
        </authorList>
    </citation>
    <scope>NUCLEOTIDE SEQUENCE [LARGE SCALE GENOMIC DNA]</scope>
    <source>
        <strain>Nichols</strain>
    </source>
</reference>
<comment type="subcellular location">
    <subcellularLocation>
        <location evidence="2">Cell membrane</location>
        <topology evidence="2">Multi-pass membrane protein</topology>
    </subcellularLocation>
</comment>
<organism>
    <name type="scientific">Treponema pallidum (strain Nichols)</name>
    <dbReference type="NCBI Taxonomy" id="243276"/>
    <lineage>
        <taxon>Bacteria</taxon>
        <taxon>Pseudomonadati</taxon>
        <taxon>Spirochaetota</taxon>
        <taxon>Spirochaetia</taxon>
        <taxon>Spirochaetales</taxon>
        <taxon>Treponemataceae</taxon>
        <taxon>Treponema</taxon>
    </lineage>
</organism>
<feature type="chain" id="PRO_0000202212" description="Uncharacterized protein TP_0181">
    <location>
        <begin position="1"/>
        <end position="147"/>
    </location>
</feature>
<feature type="transmembrane region" description="Helical" evidence="1">
    <location>
        <begin position="4"/>
        <end position="26"/>
    </location>
</feature>
<feature type="transmembrane region" description="Helical" evidence="1">
    <location>
        <begin position="123"/>
        <end position="145"/>
    </location>
</feature>
<accession>O83211</accession>
<evidence type="ECO:0000255" key="1"/>
<evidence type="ECO:0000305" key="2"/>
<gene>
    <name type="ordered locus">TP_0181</name>
</gene>
<protein>
    <recommendedName>
        <fullName>Uncharacterized protein TP_0181</fullName>
    </recommendedName>
</protein>